<reference key="1">
    <citation type="journal article" date="1994" name="Biochem. Biophys. Res. Commun.">
        <title>cDNA cloning and expression of timothy grass (Phleum pratense) pollen profilin in Escherichia coli: comparison with birch pollen profilin.</title>
        <authorList>
            <person name="Valenta R."/>
            <person name="Ball T."/>
            <person name="Vrtala S."/>
            <person name="Duchene M."/>
            <person name="Kraft D."/>
            <person name="Scheiner O."/>
        </authorList>
    </citation>
    <scope>NUCLEOTIDE SEQUENCE [MRNA]</scope>
    <source>
        <tissue>Pollen</tissue>
    </source>
</reference>
<reference key="2">
    <citation type="journal article" date="2013" name="PLoS ONE">
        <title>Analysis of the effects of polymorphism on pollen profilin structural functionality and the generation of conformational, T- and B-cell epitopes.</title>
        <authorList>
            <person name="Jimenez-Lopez J.C."/>
            <person name="Rodriguez-Garcia M.I."/>
            <person name="Alche J.D."/>
        </authorList>
    </citation>
    <scope>3D-STRUCTURE MODELING</scope>
    <scope>DISULFIDE BOND</scope>
</reference>
<evidence type="ECO:0000250" key="1"/>
<evidence type="ECO:0000305" key="2"/>
<evidence type="ECO:0000305" key="3">
    <source>
    </source>
</evidence>
<evidence type="ECO:0007829" key="4">
    <source>
        <dbReference type="PDB" id="7KYW"/>
    </source>
</evidence>
<sequence>MSWQTYVDEHLMCEIEGHHLASAAILGHDGTVWAQSADFPQFKPEEITGIMKDFDEPGHLAPTGMFVAGAKYMVIQGEPGRVIRGKKGAGGITIKKTGQALVVGIYDEPMTPGQCNMVVERLGDYLVEQGM</sequence>
<protein>
    <recommendedName>
        <fullName>Profilin-1</fullName>
    </recommendedName>
    <alternativeName>
        <fullName>Allergen Phl p 11</fullName>
    </alternativeName>
    <alternativeName>
        <fullName>Pollen allergen Phl p 12</fullName>
    </alternativeName>
    <allergenName>Phl p 12</allergenName>
</protein>
<feature type="initiator methionine" description="Removed" evidence="1">
    <location>
        <position position="1"/>
    </location>
</feature>
<feature type="chain" id="PRO_0000199663" description="Profilin-1">
    <location>
        <begin position="2"/>
        <end position="131"/>
    </location>
</feature>
<feature type="short sequence motif" description="Involved in PIP2 interaction">
    <location>
        <begin position="81"/>
        <end position="97"/>
    </location>
</feature>
<feature type="modified residue" description="Phosphothreonine" evidence="1">
    <location>
        <position position="111"/>
    </location>
</feature>
<feature type="disulfide bond" evidence="3">
    <location>
        <begin position="13"/>
        <end position="115"/>
    </location>
</feature>
<feature type="helix" evidence="4">
    <location>
        <begin position="2"/>
        <end position="9"/>
    </location>
</feature>
<feature type="turn" evidence="4">
    <location>
        <begin position="10"/>
        <end position="12"/>
    </location>
</feature>
<feature type="strand" evidence="4">
    <location>
        <begin position="21"/>
        <end position="27"/>
    </location>
</feature>
<feature type="strand" evidence="4">
    <location>
        <begin position="32"/>
        <end position="35"/>
    </location>
</feature>
<feature type="helix" evidence="4">
    <location>
        <begin position="44"/>
        <end position="55"/>
    </location>
</feature>
<feature type="turn" evidence="4">
    <location>
        <begin position="61"/>
        <end position="63"/>
    </location>
</feature>
<feature type="strand" evidence="4">
    <location>
        <begin position="65"/>
        <end position="67"/>
    </location>
</feature>
<feature type="strand" evidence="4">
    <location>
        <begin position="70"/>
        <end position="75"/>
    </location>
</feature>
<feature type="turn" evidence="4">
    <location>
        <begin position="79"/>
        <end position="81"/>
    </location>
</feature>
<feature type="strand" evidence="4">
    <location>
        <begin position="82"/>
        <end position="87"/>
    </location>
</feature>
<feature type="strand" evidence="4">
    <location>
        <begin position="90"/>
        <end position="96"/>
    </location>
</feature>
<feature type="strand" evidence="4">
    <location>
        <begin position="98"/>
        <end position="108"/>
    </location>
</feature>
<feature type="strand" evidence="4">
    <location>
        <begin position="112"/>
        <end position="114"/>
    </location>
</feature>
<feature type="helix" evidence="4">
    <location>
        <begin position="118"/>
        <end position="128"/>
    </location>
</feature>
<name>PROF1_PHLPR</name>
<organism>
    <name type="scientific">Phleum pratense</name>
    <name type="common">Common timothy</name>
    <dbReference type="NCBI Taxonomy" id="15957"/>
    <lineage>
        <taxon>Eukaryota</taxon>
        <taxon>Viridiplantae</taxon>
        <taxon>Streptophyta</taxon>
        <taxon>Embryophyta</taxon>
        <taxon>Tracheophyta</taxon>
        <taxon>Spermatophyta</taxon>
        <taxon>Magnoliopsida</taxon>
        <taxon>Liliopsida</taxon>
        <taxon>Poales</taxon>
        <taxon>Poaceae</taxon>
        <taxon>BOP clade</taxon>
        <taxon>Pooideae</taxon>
        <taxon>Poodae</taxon>
        <taxon>Poeae</taxon>
        <taxon>Poeae Chloroplast Group 2 (Poeae type)</taxon>
        <taxon>Poodinae</taxon>
        <taxon>Phleinae</taxon>
        <taxon>Phleum</taxon>
    </lineage>
</organism>
<proteinExistence type="evidence at protein level"/>
<dbReference type="EMBL" id="X77583">
    <property type="protein sequence ID" value="CAA54686.1"/>
    <property type="molecule type" value="mRNA"/>
</dbReference>
<dbReference type="PIR" id="JC2080">
    <property type="entry name" value="JC2080"/>
</dbReference>
<dbReference type="PDB" id="7KYW">
    <property type="method" value="X-ray"/>
    <property type="resolution" value="2.30 A"/>
    <property type="chains" value="A=2-131"/>
</dbReference>
<dbReference type="PDBsum" id="7KYW"/>
<dbReference type="SMR" id="P35079"/>
<dbReference type="Allergome" id="3416">
    <property type="allergen name" value="Phl p 12.0101"/>
</dbReference>
<dbReference type="Allergome" id="553">
    <property type="allergen name" value="Phl p 12"/>
</dbReference>
<dbReference type="GO" id="GO:0005938">
    <property type="term" value="C:cell cortex"/>
    <property type="evidence" value="ECO:0007669"/>
    <property type="project" value="TreeGrafter"/>
</dbReference>
<dbReference type="GO" id="GO:0005856">
    <property type="term" value="C:cytoskeleton"/>
    <property type="evidence" value="ECO:0007669"/>
    <property type="project" value="UniProtKB-SubCell"/>
</dbReference>
<dbReference type="GO" id="GO:0003785">
    <property type="term" value="F:actin monomer binding"/>
    <property type="evidence" value="ECO:0007669"/>
    <property type="project" value="TreeGrafter"/>
</dbReference>
<dbReference type="CDD" id="cd00148">
    <property type="entry name" value="PROF"/>
    <property type="match status" value="1"/>
</dbReference>
<dbReference type="FunFam" id="3.30.450.30:FF:000001">
    <property type="entry name" value="Profilin"/>
    <property type="match status" value="1"/>
</dbReference>
<dbReference type="Gene3D" id="3.30.450.30">
    <property type="entry name" value="Dynein light chain 2a, cytoplasmic"/>
    <property type="match status" value="1"/>
</dbReference>
<dbReference type="InterPro" id="IPR048278">
    <property type="entry name" value="PFN"/>
</dbReference>
<dbReference type="InterPro" id="IPR005455">
    <property type="entry name" value="PFN_euk"/>
</dbReference>
<dbReference type="InterPro" id="IPR036140">
    <property type="entry name" value="PFN_sf"/>
</dbReference>
<dbReference type="InterPro" id="IPR027310">
    <property type="entry name" value="Profilin_CS"/>
</dbReference>
<dbReference type="PANTHER" id="PTHR11604">
    <property type="entry name" value="PROFILIN"/>
    <property type="match status" value="1"/>
</dbReference>
<dbReference type="PANTHER" id="PTHR11604:SF31">
    <property type="entry name" value="PROFILIN"/>
    <property type="match status" value="1"/>
</dbReference>
<dbReference type="Pfam" id="PF00235">
    <property type="entry name" value="Profilin"/>
    <property type="match status" value="1"/>
</dbReference>
<dbReference type="PRINTS" id="PR00392">
    <property type="entry name" value="PROFILIN"/>
</dbReference>
<dbReference type="PRINTS" id="PR01640">
    <property type="entry name" value="PROFILINPLNT"/>
</dbReference>
<dbReference type="SMART" id="SM00392">
    <property type="entry name" value="PROF"/>
    <property type="match status" value="1"/>
</dbReference>
<dbReference type="SUPFAM" id="SSF55770">
    <property type="entry name" value="Profilin (actin-binding protein)"/>
    <property type="match status" value="1"/>
</dbReference>
<dbReference type="PROSITE" id="PS00414">
    <property type="entry name" value="PROFILIN"/>
    <property type="match status" value="1"/>
</dbReference>
<accession>P35079</accession>
<keyword id="KW-0002">3D-structure</keyword>
<keyword id="KW-0009">Actin-binding</keyword>
<keyword id="KW-0020">Allergen</keyword>
<keyword id="KW-0963">Cytoplasm</keyword>
<keyword id="KW-0206">Cytoskeleton</keyword>
<keyword id="KW-1015">Disulfide bond</keyword>
<keyword id="KW-0597">Phosphoprotein</keyword>
<comment type="function">
    <text>Binds to actin and affects the structure of the cytoskeleton. At high concentrations, profilin prevents the polymerization of actin, whereas it enhances it at low concentrations. By binding to PIP2, it inhibits the formation of IP3 and DG.</text>
</comment>
<comment type="subunit">
    <text>Occurs in many kinds of cells as a complex with monomeric actin in a 1:1 ratio.</text>
</comment>
<comment type="subcellular location">
    <subcellularLocation>
        <location>Cytoplasm</location>
        <location>Cytoskeleton</location>
    </subcellularLocation>
</comment>
<comment type="polymorphism">
    <text>Several isoforms of the allergen exist due to polymorphism.</text>
</comment>
<comment type="allergen">
    <text>Causes an allergic reaction in human. Binds to IgE.</text>
</comment>
<comment type="miscellaneous">
    <text evidence="3">The variability of the residues taking part of IgE-binding epitopes might be responsible of the difference in cross-reactivity among olive pollen cultivars, and between distantly related pollen species, leading to a variable range of allergy reactions among atopic patients.</text>
</comment>
<comment type="similarity">
    <text evidence="2">Belongs to the profilin family.</text>
</comment>
<gene>
    <name type="primary">PRO1</name>
    <name type="synonym">PHLPXI</name>
</gene>